<proteinExistence type="inferred from homology"/>
<keyword id="KW-1185">Reference proteome</keyword>
<keyword id="KW-0964">Secreted</keyword>
<keyword id="KW-0770">Synapse</keyword>
<feature type="chain" id="PRO_0000326132" description="Synaptic plasticity regulator PANTS">
    <location>
        <begin position="1"/>
        <end position="105"/>
    </location>
</feature>
<protein>
    <recommendedName>
        <fullName evidence="1">Synaptic plasticity regulator PANTS</fullName>
    </recommendedName>
    <alternativeName>
        <fullName evidence="1">Plasticity-associated neural transcript short</fullName>
    </alternativeName>
</protein>
<organism>
    <name type="scientific">Pongo abelii</name>
    <name type="common">Sumatran orangutan</name>
    <name type="synonym">Pongo pygmaeus abelii</name>
    <dbReference type="NCBI Taxonomy" id="9601"/>
    <lineage>
        <taxon>Eukaryota</taxon>
        <taxon>Metazoa</taxon>
        <taxon>Chordata</taxon>
        <taxon>Craniata</taxon>
        <taxon>Vertebrata</taxon>
        <taxon>Euteleostomi</taxon>
        <taxon>Mammalia</taxon>
        <taxon>Eutheria</taxon>
        <taxon>Euarchontoglires</taxon>
        <taxon>Primates</taxon>
        <taxon>Haplorrhini</taxon>
        <taxon>Catarrhini</taxon>
        <taxon>Hominidae</taxon>
        <taxon>Pongo</taxon>
    </lineage>
</organism>
<reference key="1">
    <citation type="submission" date="2004-11" db="EMBL/GenBank/DDBJ databases">
        <authorList>
            <consortium name="The German cDNA consortium"/>
        </authorList>
    </citation>
    <scope>NUCLEOTIDE SEQUENCE [LARGE SCALE MRNA]</scope>
    <source>
        <tissue>Brain cortex</tissue>
    </source>
</reference>
<comment type="function">
    <text evidence="1">Negatively regulates long-term potentiation and modulates adult synaptic plasticity. Stabilizes the interaction of RTN4 isoform A/Nogo-A with its receptors, inhibiting clustering of postsynaptic AMPA receptors at synaptic sites. Upon neuronal stimulation, degraded at synapses, reducing RTN4 signaling and allowing AMPA receptor clustering at individual synapses.</text>
</comment>
<comment type="subunit">
    <text evidence="1">Interacts with RTN4 isoform A/Nogo-A; the interaction results in enhanced RTN4-mediated inhibition of AMPA receptor clustering. Also interacts with NCAM1, RANBP2 and CCT8.</text>
</comment>
<comment type="subcellular location">
    <subcellularLocation>
        <location evidence="1">Synapse</location>
    </subcellularLocation>
    <subcellularLocation>
        <location evidence="1">Synaptic cleft</location>
    </subcellularLocation>
    <text evidence="1">Detected in both the presynaptic and postsynaptic regions of the synapse and is secreted from neurons into the synaptic cleft. May be released by neuronal dense core vesicles which mediate the release of cleaved neuropeptides.</text>
</comment>
<comment type="PTM">
    <text evidence="1">Rapidly degraded by proteolysis following neuronal stimulation, resulting in increased AMPA receptor clustering.</text>
</comment>
<comment type="similarity">
    <text evidence="2">Belongs to the UPF0545 family.</text>
</comment>
<evidence type="ECO:0000250" key="1">
    <source>
        <dbReference type="UniProtKB" id="Q3U595"/>
    </source>
</evidence>
<evidence type="ECO:0000305" key="2"/>
<name>CV039_PONAB</name>
<accession>Q5RE30</accession>
<sequence>MADGSGWQPPRPCESYRAEWKLCRSARHFVHHYYVHGERPACEQWQRDLASCRDWEERRSAEAQQSLCESERARVRAARKHILVWAPRQSPPPDWHLPLPQEKDE</sequence>
<dbReference type="EMBL" id="CR857708">
    <property type="protein sequence ID" value="CAH89977.1"/>
    <property type="molecule type" value="mRNA"/>
</dbReference>
<dbReference type="RefSeq" id="NP_001124932.1">
    <property type="nucleotide sequence ID" value="NM_001131460.2"/>
</dbReference>
<dbReference type="FunCoup" id="Q5RE30">
    <property type="interactions" value="154"/>
</dbReference>
<dbReference type="STRING" id="9601.ENSPPYP00000012916"/>
<dbReference type="GeneID" id="100171803"/>
<dbReference type="KEGG" id="pon:100171803"/>
<dbReference type="CTD" id="137382843"/>
<dbReference type="InParanoid" id="Q5RE30"/>
<dbReference type="OrthoDB" id="5946508at2759"/>
<dbReference type="Proteomes" id="UP000001595">
    <property type="component" value="Unplaced"/>
</dbReference>
<dbReference type="GO" id="GO:0045202">
    <property type="term" value="C:synapse"/>
    <property type="evidence" value="ECO:0000250"/>
    <property type="project" value="UniProtKB"/>
</dbReference>
<dbReference type="GO" id="GO:0043083">
    <property type="term" value="C:synaptic cleft"/>
    <property type="evidence" value="ECO:0000250"/>
    <property type="project" value="UniProtKB"/>
</dbReference>
<dbReference type="GO" id="GO:1900272">
    <property type="term" value="P:negative regulation of long-term synaptic potentiation"/>
    <property type="evidence" value="ECO:0000250"/>
    <property type="project" value="UniProtKB"/>
</dbReference>
<dbReference type="GO" id="GO:0048167">
    <property type="term" value="P:regulation of synaptic plasticity"/>
    <property type="evidence" value="ECO:0000250"/>
    <property type="project" value="UniProtKB"/>
</dbReference>
<dbReference type="InterPro" id="IPR021475">
    <property type="entry name" value="Pants/Emi1-like"/>
</dbReference>
<dbReference type="PANTHER" id="PTHR28052">
    <property type="entry name" value="UPF0545 PROTEIN C22ORF39"/>
    <property type="match status" value="1"/>
</dbReference>
<dbReference type="PANTHER" id="PTHR28052:SF1">
    <property type="entry name" value="UPF0545 PROTEIN C22ORF39"/>
    <property type="match status" value="1"/>
</dbReference>
<dbReference type="Pfam" id="PF11326">
    <property type="entry name" value="PANTS-like"/>
    <property type="match status" value="1"/>
</dbReference>